<accession>O18728</accession>
<proteinExistence type="evidence at transcript level"/>
<keyword id="KW-0009">Actin-binding</keyword>
<keyword id="KW-0966">Cell projection</keyword>
<keyword id="KW-0963">Cytoplasm</keyword>
<keyword id="KW-0206">Cytoskeleton</keyword>
<keyword id="KW-1185">Reference proteome</keyword>
<evidence type="ECO:0000250" key="1"/>
<evidence type="ECO:0000305" key="2"/>
<gene>
    <name type="primary">FSCN2</name>
</gene>
<reference key="1">
    <citation type="journal article" date="1997" name="FEBS Lett.">
        <title>Isolation of a cDNA encoding a photoreceptor cell-specific actin-bundling protein: retinal fascin.</title>
        <authorList>
            <person name="Saishin Y."/>
            <person name="Shimada S."/>
            <person name="Morimura H."/>
            <person name="Sato K."/>
            <person name="Ishimoto I."/>
            <person name="Tano Y."/>
            <person name="Tohyama M."/>
        </authorList>
    </citation>
    <scope>NUCLEOTIDE SEQUENCE [MRNA]</scope>
    <source>
        <tissue>Retina</tissue>
    </source>
</reference>
<dbReference type="EMBL" id="AB003485">
    <property type="protein sequence ID" value="BAA22637.1"/>
    <property type="molecule type" value="mRNA"/>
</dbReference>
<dbReference type="RefSeq" id="NP_788806.1">
    <property type="nucleotide sequence ID" value="NM_176633.3"/>
</dbReference>
<dbReference type="SMR" id="O18728"/>
<dbReference type="FunCoup" id="O18728">
    <property type="interactions" value="282"/>
</dbReference>
<dbReference type="STRING" id="9913.ENSBTAP00000034620"/>
<dbReference type="PaxDb" id="9913-ENSBTAP00000034620"/>
<dbReference type="GeneID" id="337926"/>
<dbReference type="KEGG" id="bta:337926"/>
<dbReference type="CTD" id="25794"/>
<dbReference type="VEuPathDB" id="HostDB:ENSBTAG00000024932"/>
<dbReference type="eggNOG" id="ENOG502QPRX">
    <property type="taxonomic scope" value="Eukaryota"/>
</dbReference>
<dbReference type="HOGENOM" id="CLU_030960_2_0_1"/>
<dbReference type="InParanoid" id="O18728"/>
<dbReference type="OMA" id="EPYQRYF"/>
<dbReference type="OrthoDB" id="10259868at2759"/>
<dbReference type="TreeFam" id="TF323992"/>
<dbReference type="Proteomes" id="UP000009136">
    <property type="component" value="Chromosome 19"/>
</dbReference>
<dbReference type="Bgee" id="ENSBTAG00000024932">
    <property type="expression patterns" value="Expressed in retina and 21 other cell types or tissues"/>
</dbReference>
<dbReference type="GO" id="GO:0015629">
    <property type="term" value="C:actin cytoskeleton"/>
    <property type="evidence" value="ECO:0000250"/>
    <property type="project" value="UniProtKB"/>
</dbReference>
<dbReference type="GO" id="GO:0005737">
    <property type="term" value="C:cytoplasm"/>
    <property type="evidence" value="ECO:0000318"/>
    <property type="project" value="GO_Central"/>
</dbReference>
<dbReference type="GO" id="GO:0032420">
    <property type="term" value="C:stereocilium"/>
    <property type="evidence" value="ECO:0007669"/>
    <property type="project" value="UniProtKB-SubCell"/>
</dbReference>
<dbReference type="GO" id="GO:0003779">
    <property type="term" value="F:actin binding"/>
    <property type="evidence" value="ECO:0000250"/>
    <property type="project" value="UniProtKB"/>
</dbReference>
<dbReference type="GO" id="GO:0051015">
    <property type="term" value="F:actin filament binding"/>
    <property type="evidence" value="ECO:0000250"/>
    <property type="project" value="UniProtKB"/>
</dbReference>
<dbReference type="GO" id="GO:0030674">
    <property type="term" value="F:protein-macromolecule adaptor activity"/>
    <property type="evidence" value="ECO:0007669"/>
    <property type="project" value="InterPro"/>
</dbReference>
<dbReference type="GO" id="GO:0030036">
    <property type="term" value="P:actin cytoskeleton organization"/>
    <property type="evidence" value="ECO:0000250"/>
    <property type="project" value="UniProtKB"/>
</dbReference>
<dbReference type="GO" id="GO:0051017">
    <property type="term" value="P:actin filament bundle assembly"/>
    <property type="evidence" value="ECO:0000318"/>
    <property type="project" value="GO_Central"/>
</dbReference>
<dbReference type="GO" id="GO:0016477">
    <property type="term" value="P:cell migration"/>
    <property type="evidence" value="ECO:0000318"/>
    <property type="project" value="GO_Central"/>
</dbReference>
<dbReference type="GO" id="GO:0007163">
    <property type="term" value="P:establishment or maintenance of cell polarity"/>
    <property type="evidence" value="ECO:0000318"/>
    <property type="project" value="GO_Central"/>
</dbReference>
<dbReference type="CDD" id="cd23345">
    <property type="entry name" value="beta-trefoil_FSCN2_rpt1"/>
    <property type="match status" value="1"/>
</dbReference>
<dbReference type="CDD" id="cd23349">
    <property type="entry name" value="beta-trefoil_FSCN2_rpt2"/>
    <property type="match status" value="1"/>
</dbReference>
<dbReference type="CDD" id="cd23353">
    <property type="entry name" value="beta-trefoil_FSCN2_rpt3"/>
    <property type="match status" value="1"/>
</dbReference>
<dbReference type="FunFam" id="2.80.10.50:FF:000008">
    <property type="entry name" value="Fascin"/>
    <property type="match status" value="1"/>
</dbReference>
<dbReference type="FunFam" id="2.80.10.50:FF:000010">
    <property type="entry name" value="Fascin"/>
    <property type="match status" value="1"/>
</dbReference>
<dbReference type="FunFam" id="2.80.10.50:FF:000015">
    <property type="entry name" value="Fascin"/>
    <property type="match status" value="1"/>
</dbReference>
<dbReference type="FunFam" id="2.80.10.50:FF:000037">
    <property type="entry name" value="Fascin"/>
    <property type="match status" value="1"/>
</dbReference>
<dbReference type="Gene3D" id="2.80.10.50">
    <property type="match status" value="4"/>
</dbReference>
<dbReference type="InterPro" id="IPR008999">
    <property type="entry name" value="Actin-crosslinking"/>
</dbReference>
<dbReference type="InterPro" id="IPR010431">
    <property type="entry name" value="Fascin"/>
</dbReference>
<dbReference type="InterPro" id="IPR022768">
    <property type="entry name" value="Fascin-like_dom"/>
</dbReference>
<dbReference type="InterPro" id="IPR024703">
    <property type="entry name" value="Fascin_metazoans"/>
</dbReference>
<dbReference type="PANTHER" id="PTHR10551">
    <property type="entry name" value="FASCIN"/>
    <property type="match status" value="1"/>
</dbReference>
<dbReference type="PANTHER" id="PTHR10551:SF9">
    <property type="entry name" value="FASCIN-2"/>
    <property type="match status" value="1"/>
</dbReference>
<dbReference type="Pfam" id="PF06268">
    <property type="entry name" value="Fascin"/>
    <property type="match status" value="4"/>
</dbReference>
<dbReference type="PIRSF" id="PIRSF005682">
    <property type="entry name" value="Fascin"/>
    <property type="match status" value="1"/>
</dbReference>
<dbReference type="SUPFAM" id="SSF50405">
    <property type="entry name" value="Actin-crosslinking proteins"/>
    <property type="match status" value="4"/>
</dbReference>
<sequence length="492" mass="55073">MPTNGLHQVLKIQFGLVNDTDRYLTAESFGFKVNASAPSLKRKQMWVLEPDPGEGTAVLFRSSHLGRYLSAEEDGRVACEAERPGRDCRFLVLPQPDGRWVLQSEPHGRFFGGTEDQLSCFATAITPAELWTVHLAIHPQAHLLSVSRRRYAHLCPQEDEIAADSNTPWGVDALVTLIFQNRQYCLKSCDSRYLRSDGRLVWEPEARARYTLEFKAGKLAFKDCDGHYLAPVGPAGTLRAGRNTRPGKDELFDLEESHPQVVLVAANHRYVSVRQGVNVSANQDEELDHETFLMQIDQETKKCTFYSSTGGYWTLVTHGGIQATATQVSENTMFEMEWRGRRVALKASNGRYVCMKKNGQLAAISDFVGEDEEFTLKLINRPILVLRGLDGFVCHRRGSNQLDTNRSVYDVFHLSFSDGAYQIRGRGGGFWHTGSHGSVCSDGERAEDFLFEFRERGRLAIRARSGKYLRGGASGLLRADADAPAGVALWEY</sequence>
<feature type="chain" id="PRO_0000219381" description="Fascin-2">
    <location>
        <begin position="1"/>
        <end position="492"/>
    </location>
</feature>
<comment type="function">
    <text>Acts as an actin bundling protein. May play a pivotal role in photoreceptor cell-specific events, such as disk morphogenesis.</text>
</comment>
<comment type="subcellular location">
    <subcellularLocation>
        <location evidence="1">Cytoplasm</location>
        <location evidence="1">Cytoskeleton</location>
    </subcellularLocation>
    <subcellularLocation>
        <location evidence="1">Cell projection</location>
        <location evidence="1">Stereocilium</location>
    </subcellularLocation>
</comment>
<comment type="tissue specificity">
    <text>Exclusively expressed in the eye, specifically in photoreceptor cells.</text>
</comment>
<comment type="similarity">
    <text evidence="2">Belongs to the fascin family.</text>
</comment>
<protein>
    <recommendedName>
        <fullName>Fascin-2</fullName>
    </recommendedName>
    <alternativeName>
        <fullName>Retinal fascin</fullName>
    </alternativeName>
</protein>
<organism>
    <name type="scientific">Bos taurus</name>
    <name type="common">Bovine</name>
    <dbReference type="NCBI Taxonomy" id="9913"/>
    <lineage>
        <taxon>Eukaryota</taxon>
        <taxon>Metazoa</taxon>
        <taxon>Chordata</taxon>
        <taxon>Craniata</taxon>
        <taxon>Vertebrata</taxon>
        <taxon>Euteleostomi</taxon>
        <taxon>Mammalia</taxon>
        <taxon>Eutheria</taxon>
        <taxon>Laurasiatheria</taxon>
        <taxon>Artiodactyla</taxon>
        <taxon>Ruminantia</taxon>
        <taxon>Pecora</taxon>
        <taxon>Bovidae</taxon>
        <taxon>Bovinae</taxon>
        <taxon>Bos</taxon>
    </lineage>
</organism>
<name>FSCN2_BOVIN</name>